<keyword id="KW-0045">Antibiotic biosynthesis</keyword>
<keyword id="KW-0596">Phosphopantetheine</keyword>
<keyword id="KW-0597">Phosphoprotein</keyword>
<organism>
    <name type="scientific">Streptomyces sp. (strain C5)</name>
    <dbReference type="NCBI Taxonomy" id="45212"/>
    <lineage>
        <taxon>Bacteria</taxon>
        <taxon>Bacillati</taxon>
        <taxon>Actinomycetota</taxon>
        <taxon>Actinomycetes</taxon>
        <taxon>Kitasatosporales</taxon>
        <taxon>Streptomycetaceae</taxon>
        <taxon>Streptomyces</taxon>
    </lineage>
</organism>
<feature type="chain" id="PRO_0000425718" description="Anthracycline acyl carrier protein DauA">
    <location>
        <begin position="1"/>
        <end position="84"/>
    </location>
</feature>
<feature type="domain" description="Carrier" evidence="1">
    <location>
        <begin position="3"/>
        <end position="80"/>
    </location>
</feature>
<feature type="modified residue" description="O-(pantetheine 4'-phosphoryl)serine" evidence="1">
    <location>
        <position position="40"/>
    </location>
</feature>
<proteinExistence type="inferred from homology"/>
<sequence>MAELSLAELREIMRQSLGEDEVPDLADADTVTFEDLGLDSLAVLETVNHIERTYGVKLPEEELAEIRTPHSMLIFVNERLRAAV</sequence>
<name>DPSG_STRS5</name>
<gene>
    <name type="primary">dauA</name>
    <name type="synonym">OrfG</name>
</gene>
<dbReference type="EMBL" id="U43704">
    <property type="protein sequence ID" value="AAB08017.1"/>
    <property type="molecule type" value="Genomic_DNA"/>
</dbReference>
<dbReference type="SMR" id="Q53878"/>
<dbReference type="UniPathway" id="UPA00054"/>
<dbReference type="UniPathway" id="UPA01040"/>
<dbReference type="UniPathway" id="UPA01042"/>
<dbReference type="UniPathway" id="UPA01043"/>
<dbReference type="GO" id="GO:0031177">
    <property type="term" value="F:phosphopantetheine binding"/>
    <property type="evidence" value="ECO:0007669"/>
    <property type="project" value="InterPro"/>
</dbReference>
<dbReference type="GO" id="GO:1901771">
    <property type="term" value="P:daunorubicin biosynthetic process"/>
    <property type="evidence" value="ECO:0000315"/>
    <property type="project" value="UniProtKB"/>
</dbReference>
<dbReference type="Gene3D" id="1.10.1200.10">
    <property type="entry name" value="ACP-like"/>
    <property type="match status" value="1"/>
</dbReference>
<dbReference type="InterPro" id="IPR036736">
    <property type="entry name" value="ACP-like_sf"/>
</dbReference>
<dbReference type="InterPro" id="IPR020806">
    <property type="entry name" value="PKS_PP-bd"/>
</dbReference>
<dbReference type="InterPro" id="IPR009081">
    <property type="entry name" value="PP-bd_ACP"/>
</dbReference>
<dbReference type="InterPro" id="IPR006162">
    <property type="entry name" value="Ppantetheine_attach_site"/>
</dbReference>
<dbReference type="Pfam" id="PF00550">
    <property type="entry name" value="PP-binding"/>
    <property type="match status" value="1"/>
</dbReference>
<dbReference type="SMART" id="SM00823">
    <property type="entry name" value="PKS_PP"/>
    <property type="match status" value="1"/>
</dbReference>
<dbReference type="SUPFAM" id="SSF47336">
    <property type="entry name" value="ACP-like"/>
    <property type="match status" value="1"/>
</dbReference>
<dbReference type="PROSITE" id="PS50075">
    <property type="entry name" value="CARRIER"/>
    <property type="match status" value="1"/>
</dbReference>
<dbReference type="PROSITE" id="PS00012">
    <property type="entry name" value="PHOSPHOPANTETHEINE"/>
    <property type="match status" value="1"/>
</dbReference>
<evidence type="ECO:0000255" key="1">
    <source>
        <dbReference type="PROSITE-ProRule" id="PRU00258"/>
    </source>
</evidence>
<evidence type="ECO:0000269" key="2">
    <source>
    </source>
</evidence>
<comment type="function">
    <text evidence="2">Involved in the biosynthesis of aklanonate which is an important precursor common to the formation of the clinically significant anthracyclines such as carminomycin, daunorubicin (daunomycin), rhodomycin, aclacinomycin T (aklavin) and aclacinomycin A (aclarubicin). These compounds are aromatic polyketide antibiotics that exhibit high cytotoxicity and are widely applied in the chemotherapy of a variety of cancers.</text>
</comment>
<comment type="pathway">
    <text>Antibiotic biosynthesis; daunorubicin biosynthesis.</text>
</comment>
<comment type="pathway">
    <text>Antibiotic biosynthesis; carminomycin biosynthesis.</text>
</comment>
<comment type="pathway">
    <text>Antibiotic biosynthesis; rhodomycin biosynthesis.</text>
</comment>
<comment type="pathway">
    <text>Antibiotic biosynthesis; aclacinomycin biosynthesis.</text>
</comment>
<protein>
    <recommendedName>
        <fullName>Anthracycline acyl carrier protein DauA</fullName>
    </recommendedName>
</protein>
<reference key="1">
    <citation type="journal article" date="1996" name="J. Bacteriol.">
        <title>Cloning, sequencing, and analysis of aklaviketone reductase from Streptomyces sp. strain C5.</title>
        <authorList>
            <person name="Dickens M.L."/>
            <person name="Ye J."/>
            <person name="Strohl W.R."/>
        </authorList>
    </citation>
    <scope>NUCLEOTIDE SEQUENCE [GENOMIC DNA]</scope>
    <source>
        <strain>C5</strain>
    </source>
</reference>
<reference key="2">
    <citation type="journal article" date="1997" name="J. Bacteriol.">
        <title>Minimal Streptomyces sp. strain C5 daunorubicin polyketide biosynthesis genes required for aklanonic acid biosynthesis.</title>
        <authorList>
            <person name="Rajgarhia V.B."/>
            <person name="Strohl W.R."/>
        </authorList>
    </citation>
    <scope>FUNCTION</scope>
    <source>
        <strain>C5</strain>
    </source>
</reference>
<accession>Q53878</accession>